<name>MDH_RHOJR</name>
<comment type="function">
    <text evidence="1">Catalyzes the reversible oxidation of malate to oxaloacetate.</text>
</comment>
<comment type="catalytic activity">
    <reaction evidence="1">
        <text>(S)-malate + NAD(+) = oxaloacetate + NADH + H(+)</text>
        <dbReference type="Rhea" id="RHEA:21432"/>
        <dbReference type="ChEBI" id="CHEBI:15378"/>
        <dbReference type="ChEBI" id="CHEBI:15589"/>
        <dbReference type="ChEBI" id="CHEBI:16452"/>
        <dbReference type="ChEBI" id="CHEBI:57540"/>
        <dbReference type="ChEBI" id="CHEBI:57945"/>
        <dbReference type="EC" id="1.1.1.37"/>
    </reaction>
</comment>
<comment type="similarity">
    <text evidence="1">Belongs to the LDH/MDH superfamily. MDH type 2 family.</text>
</comment>
<sequence>MAQSPPPAVVTVTGAAGSIGYASLFRIAAGEMLGPDTPIRLRLLEIPSAVSAAEGTAMELDDSAFPLLRDIEVHDDPKRGFDGTDVALLIGSRPRSKGMERGDLLAANGQIFTVQGRALNQVAADGVRVLVVGNPANTNALVAANNAPDIPAERFTALTRLDHNRAIAQLARHSGAAVKDIRRVAIWGNHSSTQYPDIFHARVGDRSGAEFAADREWLTGDFIPTVANRGSAIIEARGASSAASAANAAIDHVHDWVLGTPDDDWTSVALPSTGAYGVPEGLVSSFPVRSVDGSWQIVDGLEIDDFSRKLIDASVGELESERDAVRGMGFI</sequence>
<feature type="chain" id="PRO_0000292374" description="Malate dehydrogenase">
    <location>
        <begin position="1"/>
        <end position="331"/>
    </location>
</feature>
<feature type="active site" description="Proton acceptor" evidence="1">
    <location>
        <position position="190"/>
    </location>
</feature>
<feature type="binding site" evidence="1">
    <location>
        <begin position="14"/>
        <end position="20"/>
    </location>
    <ligand>
        <name>NAD(+)</name>
        <dbReference type="ChEBI" id="CHEBI:57540"/>
    </ligand>
</feature>
<feature type="binding site" evidence="1">
    <location>
        <position position="95"/>
    </location>
    <ligand>
        <name>substrate</name>
    </ligand>
</feature>
<feature type="binding site" evidence="1">
    <location>
        <position position="101"/>
    </location>
    <ligand>
        <name>substrate</name>
    </ligand>
</feature>
<feature type="binding site" evidence="1">
    <location>
        <position position="108"/>
    </location>
    <ligand>
        <name>NAD(+)</name>
        <dbReference type="ChEBI" id="CHEBI:57540"/>
    </ligand>
</feature>
<feature type="binding site" evidence="1">
    <location>
        <position position="115"/>
    </location>
    <ligand>
        <name>NAD(+)</name>
        <dbReference type="ChEBI" id="CHEBI:57540"/>
    </ligand>
</feature>
<feature type="binding site" evidence="1">
    <location>
        <begin position="132"/>
        <end position="134"/>
    </location>
    <ligand>
        <name>NAD(+)</name>
        <dbReference type="ChEBI" id="CHEBI:57540"/>
    </ligand>
</feature>
<feature type="binding site" evidence="1">
    <location>
        <position position="134"/>
    </location>
    <ligand>
        <name>substrate</name>
    </ligand>
</feature>
<feature type="binding site" evidence="1">
    <location>
        <position position="165"/>
    </location>
    <ligand>
        <name>substrate</name>
    </ligand>
</feature>
<reference key="1">
    <citation type="journal article" date="2006" name="Proc. Natl. Acad. Sci. U.S.A.">
        <title>The complete genome of Rhodococcus sp. RHA1 provides insights into a catabolic powerhouse.</title>
        <authorList>
            <person name="McLeod M.P."/>
            <person name="Warren R.L."/>
            <person name="Hsiao W.W.L."/>
            <person name="Araki N."/>
            <person name="Myhre M."/>
            <person name="Fernandes C."/>
            <person name="Miyazawa D."/>
            <person name="Wong W."/>
            <person name="Lillquist A.L."/>
            <person name="Wang D."/>
            <person name="Dosanjh M."/>
            <person name="Hara H."/>
            <person name="Petrescu A."/>
            <person name="Morin R.D."/>
            <person name="Yang G."/>
            <person name="Stott J.M."/>
            <person name="Schein J.E."/>
            <person name="Shin H."/>
            <person name="Smailus D."/>
            <person name="Siddiqui A.S."/>
            <person name="Marra M.A."/>
            <person name="Jones S.J.M."/>
            <person name="Holt R."/>
            <person name="Brinkman F.S.L."/>
            <person name="Miyauchi K."/>
            <person name="Fukuda M."/>
            <person name="Davies J.E."/>
            <person name="Mohn W.W."/>
            <person name="Eltis L.D."/>
        </authorList>
    </citation>
    <scope>NUCLEOTIDE SEQUENCE [LARGE SCALE GENOMIC DNA]</scope>
    <source>
        <strain>RHA1</strain>
    </source>
</reference>
<evidence type="ECO:0000255" key="1">
    <source>
        <dbReference type="HAMAP-Rule" id="MF_01517"/>
    </source>
</evidence>
<keyword id="KW-0520">NAD</keyword>
<keyword id="KW-0560">Oxidoreductase</keyword>
<keyword id="KW-0816">Tricarboxylic acid cycle</keyword>
<dbReference type="EC" id="1.1.1.37" evidence="1"/>
<dbReference type="EMBL" id="CP000431">
    <property type="protein sequence ID" value="ABG98021.1"/>
    <property type="molecule type" value="Genomic_DNA"/>
</dbReference>
<dbReference type="RefSeq" id="WP_011598209.1">
    <property type="nucleotide sequence ID" value="NC_008268.1"/>
</dbReference>
<dbReference type="SMR" id="Q0S365"/>
<dbReference type="KEGG" id="rha:RHA1_ro06244"/>
<dbReference type="PATRIC" id="fig|101510.16.peg.6292"/>
<dbReference type="eggNOG" id="COG0039">
    <property type="taxonomic scope" value="Bacteria"/>
</dbReference>
<dbReference type="HOGENOM" id="CLU_040727_2_0_11"/>
<dbReference type="OrthoDB" id="9802969at2"/>
<dbReference type="Proteomes" id="UP000008710">
    <property type="component" value="Chromosome"/>
</dbReference>
<dbReference type="GO" id="GO:0030060">
    <property type="term" value="F:L-malate dehydrogenase (NAD+) activity"/>
    <property type="evidence" value="ECO:0007669"/>
    <property type="project" value="UniProtKB-UniRule"/>
</dbReference>
<dbReference type="GO" id="GO:0006108">
    <property type="term" value="P:malate metabolic process"/>
    <property type="evidence" value="ECO:0007669"/>
    <property type="project" value="InterPro"/>
</dbReference>
<dbReference type="GO" id="GO:0006099">
    <property type="term" value="P:tricarboxylic acid cycle"/>
    <property type="evidence" value="ECO:0007669"/>
    <property type="project" value="UniProtKB-UniRule"/>
</dbReference>
<dbReference type="CDD" id="cd01338">
    <property type="entry name" value="MDH_chloroplast-like"/>
    <property type="match status" value="1"/>
</dbReference>
<dbReference type="FunFam" id="3.40.50.720:FF:000010">
    <property type="entry name" value="Malate dehydrogenase"/>
    <property type="match status" value="1"/>
</dbReference>
<dbReference type="FunFam" id="3.90.110.10:FF:000002">
    <property type="entry name" value="Malate dehydrogenase"/>
    <property type="match status" value="1"/>
</dbReference>
<dbReference type="Gene3D" id="3.90.110.10">
    <property type="entry name" value="Lactate dehydrogenase/glycoside hydrolase, family 4, C-terminal"/>
    <property type="match status" value="1"/>
</dbReference>
<dbReference type="Gene3D" id="3.40.50.720">
    <property type="entry name" value="NAD(P)-binding Rossmann-like Domain"/>
    <property type="match status" value="1"/>
</dbReference>
<dbReference type="HAMAP" id="MF_01517">
    <property type="entry name" value="Malate_dehydrog_2"/>
    <property type="match status" value="1"/>
</dbReference>
<dbReference type="InterPro" id="IPR001557">
    <property type="entry name" value="L-lactate/malate_DH"/>
</dbReference>
<dbReference type="InterPro" id="IPR022383">
    <property type="entry name" value="Lactate/malate_DH_C"/>
</dbReference>
<dbReference type="InterPro" id="IPR001236">
    <property type="entry name" value="Lactate/malate_DH_N"/>
</dbReference>
<dbReference type="InterPro" id="IPR015955">
    <property type="entry name" value="Lactate_DH/Glyco_Ohase_4_C"/>
</dbReference>
<dbReference type="InterPro" id="IPR001252">
    <property type="entry name" value="Malate_DH_AS"/>
</dbReference>
<dbReference type="InterPro" id="IPR010945">
    <property type="entry name" value="Malate_DH_type2"/>
</dbReference>
<dbReference type="InterPro" id="IPR036291">
    <property type="entry name" value="NAD(P)-bd_dom_sf"/>
</dbReference>
<dbReference type="NCBIfam" id="TIGR01759">
    <property type="entry name" value="MalateDH-SF1"/>
    <property type="match status" value="1"/>
</dbReference>
<dbReference type="NCBIfam" id="NF003916">
    <property type="entry name" value="PRK05442.1"/>
    <property type="match status" value="1"/>
</dbReference>
<dbReference type="PANTHER" id="PTHR23382">
    <property type="entry name" value="MALATE DEHYDROGENASE"/>
    <property type="match status" value="1"/>
</dbReference>
<dbReference type="Pfam" id="PF02866">
    <property type="entry name" value="Ldh_1_C"/>
    <property type="match status" value="1"/>
</dbReference>
<dbReference type="Pfam" id="PF00056">
    <property type="entry name" value="Ldh_1_N"/>
    <property type="match status" value="1"/>
</dbReference>
<dbReference type="PIRSF" id="PIRSF000102">
    <property type="entry name" value="Lac_mal_DH"/>
    <property type="match status" value="1"/>
</dbReference>
<dbReference type="SUPFAM" id="SSF56327">
    <property type="entry name" value="LDH C-terminal domain-like"/>
    <property type="match status" value="1"/>
</dbReference>
<dbReference type="SUPFAM" id="SSF51735">
    <property type="entry name" value="NAD(P)-binding Rossmann-fold domains"/>
    <property type="match status" value="1"/>
</dbReference>
<dbReference type="PROSITE" id="PS00068">
    <property type="entry name" value="MDH"/>
    <property type="match status" value="1"/>
</dbReference>
<accession>Q0S365</accession>
<proteinExistence type="inferred from homology"/>
<gene>
    <name evidence="1" type="primary">mdh</name>
    <name type="ordered locus">RHA1_ro06244</name>
</gene>
<organism>
    <name type="scientific">Rhodococcus jostii (strain RHA1)</name>
    <dbReference type="NCBI Taxonomy" id="101510"/>
    <lineage>
        <taxon>Bacteria</taxon>
        <taxon>Bacillati</taxon>
        <taxon>Actinomycetota</taxon>
        <taxon>Actinomycetes</taxon>
        <taxon>Mycobacteriales</taxon>
        <taxon>Nocardiaceae</taxon>
        <taxon>Rhodococcus</taxon>
    </lineage>
</organism>
<protein>
    <recommendedName>
        <fullName evidence="1">Malate dehydrogenase</fullName>
        <ecNumber evidence="1">1.1.1.37</ecNumber>
    </recommendedName>
</protein>